<comment type="function">
    <text evidence="1">Putative transcription factor, which may be involved in patterning of central nervous system and pancreas.</text>
</comment>
<comment type="subcellular location">
    <subcellularLocation>
        <location evidence="2">Nucleus</location>
    </subcellularLocation>
</comment>
<comment type="alternative products">
    <event type="alternative splicing"/>
    <isoform>
        <id>A6NJ46-1</id>
        <name>1</name>
        <sequence type="displayed"/>
    </isoform>
    <isoform>
        <id>A6NJ46-2</id>
        <name>2</name>
        <sequence type="described" ref="VSP_029523"/>
    </isoform>
</comment>
<accession>A6NJ46</accession>
<accession>Q96LR0</accession>
<keyword id="KW-0025">Alternative splicing</keyword>
<keyword id="KW-0238">DNA-binding</keyword>
<keyword id="KW-0371">Homeobox</keyword>
<keyword id="KW-0539">Nucleus</keyword>
<keyword id="KW-1267">Proteomics identification</keyword>
<keyword id="KW-1185">Reference proteome</keyword>
<keyword id="KW-0804">Transcription</keyword>
<keyword id="KW-0805">Transcription regulation</keyword>
<organism>
    <name type="scientific">Homo sapiens</name>
    <name type="common">Human</name>
    <dbReference type="NCBI Taxonomy" id="9606"/>
    <lineage>
        <taxon>Eukaryota</taxon>
        <taxon>Metazoa</taxon>
        <taxon>Chordata</taxon>
        <taxon>Craniata</taxon>
        <taxon>Vertebrata</taxon>
        <taxon>Euteleostomi</taxon>
        <taxon>Mammalia</taxon>
        <taxon>Eutheria</taxon>
        <taxon>Euarchontoglires</taxon>
        <taxon>Primates</taxon>
        <taxon>Haplorrhini</taxon>
        <taxon>Catarrhini</taxon>
        <taxon>Hominidae</taxon>
        <taxon>Homo</taxon>
    </lineage>
</organism>
<protein>
    <recommendedName>
        <fullName>Homeobox protein Nkx-6.3</fullName>
    </recommendedName>
</protein>
<feature type="chain" id="PRO_0000311330" description="Homeobox protein Nkx-6.3">
    <location>
        <begin position="1"/>
        <end position="265"/>
    </location>
</feature>
<feature type="DNA-binding region" description="Homeobox" evidence="2">
    <location>
        <begin position="139"/>
        <end position="198"/>
    </location>
</feature>
<feature type="region of interest" description="Disordered" evidence="3">
    <location>
        <begin position="196"/>
        <end position="240"/>
    </location>
</feature>
<feature type="splice variant" id="VSP_029523" description="In isoform 2." evidence="4">
    <original>MESNLQGTFLLNNTPLAQFPEMKAPVCQYSVQNSFYKLSPPGLGPQLAAGTPHGITDILSRPVAAPNNSLLSGYPHVAGFGGLSSQGVYYSPQVGNFSKAGNEYPTRTRNCWADTGQDWRGGRQCSNTPDPLSDSIHKKKHTRPTFTGHQIFALEKTFEQTKYLAGPERARLAYSLGMTESQVK</original>
    <variation>MQQGQLAPGSRLCSGPWGLPELQPAAPSSSAAQLPWGESWGEEADTPACLSASG</variation>
    <location>
        <begin position="1"/>
        <end position="184"/>
    </location>
</feature>
<dbReference type="EMBL" id="AK057898">
    <property type="protein sequence ID" value="BAB71610.1"/>
    <property type="molecule type" value="mRNA"/>
</dbReference>
<dbReference type="EMBL" id="AC113133">
    <property type="status" value="NOT_ANNOTATED_CDS"/>
    <property type="molecule type" value="Genomic_DNA"/>
</dbReference>
<dbReference type="EMBL" id="CH471080">
    <property type="protein sequence ID" value="EAW63251.1"/>
    <property type="molecule type" value="Genomic_DNA"/>
</dbReference>
<dbReference type="EMBL" id="CH471080">
    <property type="protein sequence ID" value="EAW63252.1"/>
    <property type="molecule type" value="Genomic_DNA"/>
</dbReference>
<dbReference type="CCDS" id="CCDS6118.1">
    <molecule id="A6NJ46-2"/>
</dbReference>
<dbReference type="CCDS" id="CCDS94289.1">
    <molecule id="A6NJ46-1"/>
</dbReference>
<dbReference type="RefSeq" id="NP_001351770.1">
    <molecule id="A6NJ46-1"/>
    <property type="nucleotide sequence ID" value="NM_001364841.2"/>
</dbReference>
<dbReference type="RefSeq" id="NP_689781.1">
    <molecule id="A6NJ46-2"/>
    <property type="nucleotide sequence ID" value="NM_152568.3"/>
</dbReference>
<dbReference type="RefSeq" id="XP_016868632.1">
    <property type="nucleotide sequence ID" value="XM_017013143.1"/>
</dbReference>
<dbReference type="SMR" id="A6NJ46"/>
<dbReference type="BioGRID" id="127627">
    <property type="interactions" value="8"/>
</dbReference>
<dbReference type="FunCoup" id="A6NJ46">
    <property type="interactions" value="1027"/>
</dbReference>
<dbReference type="STRING" id="9606.ENSP00000429553"/>
<dbReference type="iPTMnet" id="A6NJ46"/>
<dbReference type="PhosphoSitePlus" id="A6NJ46"/>
<dbReference type="BioMuta" id="NKX6-3"/>
<dbReference type="jPOST" id="A6NJ46"/>
<dbReference type="MassIVE" id="A6NJ46"/>
<dbReference type="PaxDb" id="9606-ENSP00000429553"/>
<dbReference type="PeptideAtlas" id="A6NJ46"/>
<dbReference type="ProteomicsDB" id="1309">
    <molecule id="A6NJ46-1"/>
</dbReference>
<dbReference type="ProteomicsDB" id="1310">
    <molecule id="A6NJ46-2"/>
</dbReference>
<dbReference type="Antibodypedia" id="23941">
    <property type="antibodies" value="135 antibodies from 22 providers"/>
</dbReference>
<dbReference type="DNASU" id="157848"/>
<dbReference type="Ensembl" id="ENST00000518699.4">
    <molecule id="A6NJ46-1"/>
    <property type="protein sequence ID" value="ENSP00000428361.2"/>
    <property type="gene ID" value="ENSG00000165066.13"/>
</dbReference>
<dbReference type="Ensembl" id="ENST00000524115.2">
    <molecule id="A6NJ46-2"/>
    <property type="protein sequence ID" value="ENSP00000429553.2"/>
    <property type="gene ID" value="ENSG00000165066.13"/>
</dbReference>
<dbReference type="GeneID" id="157848"/>
<dbReference type="KEGG" id="hsa:157848"/>
<dbReference type="MANE-Select" id="ENST00000518699.4">
    <property type="protein sequence ID" value="ENSP00000428361.2"/>
    <property type="RefSeq nucleotide sequence ID" value="NM_001364841.2"/>
    <property type="RefSeq protein sequence ID" value="NP_001351770.1"/>
</dbReference>
<dbReference type="UCSC" id="uc003xoa.3">
    <molecule id="A6NJ46-1"/>
    <property type="organism name" value="human"/>
</dbReference>
<dbReference type="AGR" id="HGNC:26328"/>
<dbReference type="CTD" id="157848"/>
<dbReference type="DisGeNET" id="157848"/>
<dbReference type="GeneCards" id="NKX6-3"/>
<dbReference type="HGNC" id="HGNC:26328">
    <property type="gene designation" value="NKX6-3"/>
</dbReference>
<dbReference type="HPA" id="ENSG00000165066">
    <property type="expression patterns" value="Group enriched (brain, intestine, stomach)"/>
</dbReference>
<dbReference type="MIM" id="610772">
    <property type="type" value="gene"/>
</dbReference>
<dbReference type="neXtProt" id="NX_A6NJ46"/>
<dbReference type="OpenTargets" id="ENSG00000165066"/>
<dbReference type="PharmGKB" id="PA145148400"/>
<dbReference type="VEuPathDB" id="HostDB:ENSG00000165066"/>
<dbReference type="eggNOG" id="KOG0847">
    <property type="taxonomic scope" value="Eukaryota"/>
</dbReference>
<dbReference type="GeneTree" id="ENSGT00940000160545"/>
<dbReference type="HOGENOM" id="CLU_1895494_0_0_1"/>
<dbReference type="InParanoid" id="A6NJ46"/>
<dbReference type="OMA" id="EMKAPMC"/>
<dbReference type="OrthoDB" id="6159439at2759"/>
<dbReference type="PAN-GO" id="A6NJ46">
    <property type="GO annotations" value="5 GO annotations based on evolutionary models"/>
</dbReference>
<dbReference type="PhylomeDB" id="A6NJ46"/>
<dbReference type="PathwayCommons" id="A6NJ46"/>
<dbReference type="SIGNOR" id="A6NJ46"/>
<dbReference type="BioGRID-ORCS" id="157848">
    <property type="hits" value="17 hits in 1147 CRISPR screens"/>
</dbReference>
<dbReference type="GenomeRNAi" id="157848"/>
<dbReference type="Pharos" id="A6NJ46">
    <property type="development level" value="Tbio"/>
</dbReference>
<dbReference type="PRO" id="PR:A6NJ46"/>
<dbReference type="Proteomes" id="UP000005640">
    <property type="component" value="Chromosome 8"/>
</dbReference>
<dbReference type="RNAct" id="A6NJ46">
    <property type="molecule type" value="protein"/>
</dbReference>
<dbReference type="Bgee" id="ENSG00000165066">
    <property type="expression patterns" value="Expressed in primordial germ cell in gonad and 53 other cell types or tissues"/>
</dbReference>
<dbReference type="GO" id="GO:0000785">
    <property type="term" value="C:chromatin"/>
    <property type="evidence" value="ECO:0000247"/>
    <property type="project" value="NTNU_SB"/>
</dbReference>
<dbReference type="GO" id="GO:0005634">
    <property type="term" value="C:nucleus"/>
    <property type="evidence" value="ECO:0000318"/>
    <property type="project" value="GO_Central"/>
</dbReference>
<dbReference type="GO" id="GO:0001228">
    <property type="term" value="F:DNA-binding transcription activator activity, RNA polymerase II-specific"/>
    <property type="evidence" value="ECO:0000314"/>
    <property type="project" value="ARUK-UCL"/>
</dbReference>
<dbReference type="GO" id="GO:0000981">
    <property type="term" value="F:DNA-binding transcription factor activity, RNA polymerase II-specific"/>
    <property type="evidence" value="ECO:0000247"/>
    <property type="project" value="NTNU_SB"/>
</dbReference>
<dbReference type="GO" id="GO:0001227">
    <property type="term" value="F:DNA-binding transcription repressor activity, RNA polymerase II-specific"/>
    <property type="evidence" value="ECO:0000314"/>
    <property type="project" value="ARUK-UCL"/>
</dbReference>
<dbReference type="GO" id="GO:0000978">
    <property type="term" value="F:RNA polymerase II cis-regulatory region sequence-specific DNA binding"/>
    <property type="evidence" value="ECO:0000314"/>
    <property type="project" value="ARUK-UCL"/>
</dbReference>
<dbReference type="GO" id="GO:0043565">
    <property type="term" value="F:sequence-specific DNA binding"/>
    <property type="evidence" value="ECO:0000314"/>
    <property type="project" value="NTNU_SB"/>
</dbReference>
<dbReference type="GO" id="GO:1990837">
    <property type="term" value="F:sequence-specific double-stranded DNA binding"/>
    <property type="evidence" value="ECO:0000314"/>
    <property type="project" value="ARUK-UCL"/>
</dbReference>
<dbReference type="GO" id="GO:0030154">
    <property type="term" value="P:cell differentiation"/>
    <property type="evidence" value="ECO:0000318"/>
    <property type="project" value="GO_Central"/>
</dbReference>
<dbReference type="GO" id="GO:0001709">
    <property type="term" value="P:cell fate determination"/>
    <property type="evidence" value="ECO:0007669"/>
    <property type="project" value="Ensembl"/>
</dbReference>
<dbReference type="GO" id="GO:0002067">
    <property type="term" value="P:glandular epithelial cell differentiation"/>
    <property type="evidence" value="ECO:0007669"/>
    <property type="project" value="Ensembl"/>
</dbReference>
<dbReference type="GO" id="GO:0061106">
    <property type="term" value="P:negative regulation of stomach neuroendocrine cell differentiation"/>
    <property type="evidence" value="ECO:0007669"/>
    <property type="project" value="Ensembl"/>
</dbReference>
<dbReference type="GO" id="GO:0000122">
    <property type="term" value="P:negative regulation of transcription by RNA polymerase II"/>
    <property type="evidence" value="ECO:0000314"/>
    <property type="project" value="ARUK-UCL"/>
</dbReference>
<dbReference type="GO" id="GO:0045944">
    <property type="term" value="P:positive regulation of transcription by RNA polymerase II"/>
    <property type="evidence" value="ECO:0000314"/>
    <property type="project" value="ARUK-UCL"/>
</dbReference>
<dbReference type="GO" id="GO:0006357">
    <property type="term" value="P:regulation of transcription by RNA polymerase II"/>
    <property type="evidence" value="ECO:0000318"/>
    <property type="project" value="GO_Central"/>
</dbReference>
<dbReference type="GO" id="GO:0061102">
    <property type="term" value="P:stomach neuroendocrine cell differentiation"/>
    <property type="evidence" value="ECO:0007669"/>
    <property type="project" value="Ensembl"/>
</dbReference>
<dbReference type="CDD" id="cd00086">
    <property type="entry name" value="homeodomain"/>
    <property type="match status" value="1"/>
</dbReference>
<dbReference type="FunFam" id="1.10.10.60:FF:000067">
    <property type="entry name" value="NK6 homeobox 1"/>
    <property type="match status" value="1"/>
</dbReference>
<dbReference type="Gene3D" id="1.10.10.60">
    <property type="entry name" value="Homeodomain-like"/>
    <property type="match status" value="1"/>
</dbReference>
<dbReference type="InterPro" id="IPR001356">
    <property type="entry name" value="HD"/>
</dbReference>
<dbReference type="InterPro" id="IPR020479">
    <property type="entry name" value="HD_metazoa"/>
</dbReference>
<dbReference type="InterPro" id="IPR017970">
    <property type="entry name" value="Homeobox_CS"/>
</dbReference>
<dbReference type="InterPro" id="IPR050394">
    <property type="entry name" value="Homeobox_NK-like"/>
</dbReference>
<dbReference type="InterPro" id="IPR009057">
    <property type="entry name" value="Homeodomain-like_sf"/>
</dbReference>
<dbReference type="InterPro" id="IPR000047">
    <property type="entry name" value="HTH_motif"/>
</dbReference>
<dbReference type="PANTHER" id="PTHR24340">
    <property type="entry name" value="HOMEOBOX PROTEIN NKX"/>
    <property type="match status" value="1"/>
</dbReference>
<dbReference type="PANTHER" id="PTHR24340:SF20">
    <property type="entry name" value="HOMEOBOX PROTEIN NKX-6.3"/>
    <property type="match status" value="1"/>
</dbReference>
<dbReference type="Pfam" id="PF00046">
    <property type="entry name" value="Homeodomain"/>
    <property type="match status" value="1"/>
</dbReference>
<dbReference type="PRINTS" id="PR00024">
    <property type="entry name" value="HOMEOBOX"/>
</dbReference>
<dbReference type="PRINTS" id="PR00031">
    <property type="entry name" value="HTHREPRESSR"/>
</dbReference>
<dbReference type="SMART" id="SM00389">
    <property type="entry name" value="HOX"/>
    <property type="match status" value="1"/>
</dbReference>
<dbReference type="SUPFAM" id="SSF46689">
    <property type="entry name" value="Homeodomain-like"/>
    <property type="match status" value="1"/>
</dbReference>
<dbReference type="PROSITE" id="PS00027">
    <property type="entry name" value="HOMEOBOX_1"/>
    <property type="match status" value="1"/>
</dbReference>
<dbReference type="PROSITE" id="PS50071">
    <property type="entry name" value="HOMEOBOX_2"/>
    <property type="match status" value="1"/>
</dbReference>
<sequence length="265" mass="28948">MESNLQGTFLLNNTPLAQFPEMKAPVCQYSVQNSFYKLSPPGLGPQLAAGTPHGITDILSRPVAAPNNSLLSGYPHVAGFGGLSSQGVYYSPQVGNFSKAGNEYPTRTRNCWADTGQDWRGGRQCSNTPDPLSDSIHKKKHTRPTFTGHQIFALEKTFEQTKYLAGPERARLAYSLGMTESQVKVWFQNRRTKWRKKSALEPSSSTPRAPGGAGAGAGGDRAPSENEDDEYNKPLDPDSDDEKIRLLLRKHRAAFSVLSLGAHSV</sequence>
<name>NKX63_HUMAN</name>
<reference key="1">
    <citation type="journal article" date="2004" name="Nat. Genet.">
        <title>Complete sequencing and characterization of 21,243 full-length human cDNAs.</title>
        <authorList>
            <person name="Ota T."/>
            <person name="Suzuki Y."/>
            <person name="Nishikawa T."/>
            <person name="Otsuki T."/>
            <person name="Sugiyama T."/>
            <person name="Irie R."/>
            <person name="Wakamatsu A."/>
            <person name="Hayashi K."/>
            <person name="Sato H."/>
            <person name="Nagai K."/>
            <person name="Kimura K."/>
            <person name="Makita H."/>
            <person name="Sekine M."/>
            <person name="Obayashi M."/>
            <person name="Nishi T."/>
            <person name="Shibahara T."/>
            <person name="Tanaka T."/>
            <person name="Ishii S."/>
            <person name="Yamamoto J."/>
            <person name="Saito K."/>
            <person name="Kawai Y."/>
            <person name="Isono Y."/>
            <person name="Nakamura Y."/>
            <person name="Nagahari K."/>
            <person name="Murakami K."/>
            <person name="Yasuda T."/>
            <person name="Iwayanagi T."/>
            <person name="Wagatsuma M."/>
            <person name="Shiratori A."/>
            <person name="Sudo H."/>
            <person name="Hosoiri T."/>
            <person name="Kaku Y."/>
            <person name="Kodaira H."/>
            <person name="Kondo H."/>
            <person name="Sugawara M."/>
            <person name="Takahashi M."/>
            <person name="Kanda K."/>
            <person name="Yokoi T."/>
            <person name="Furuya T."/>
            <person name="Kikkawa E."/>
            <person name="Omura Y."/>
            <person name="Abe K."/>
            <person name="Kamihara K."/>
            <person name="Katsuta N."/>
            <person name="Sato K."/>
            <person name="Tanikawa M."/>
            <person name="Yamazaki M."/>
            <person name="Ninomiya K."/>
            <person name="Ishibashi T."/>
            <person name="Yamashita H."/>
            <person name="Murakawa K."/>
            <person name="Fujimori K."/>
            <person name="Tanai H."/>
            <person name="Kimata M."/>
            <person name="Watanabe M."/>
            <person name="Hiraoka S."/>
            <person name="Chiba Y."/>
            <person name="Ishida S."/>
            <person name="Ono Y."/>
            <person name="Takiguchi S."/>
            <person name="Watanabe S."/>
            <person name="Yosida M."/>
            <person name="Hotuta T."/>
            <person name="Kusano J."/>
            <person name="Kanehori K."/>
            <person name="Takahashi-Fujii A."/>
            <person name="Hara H."/>
            <person name="Tanase T.-O."/>
            <person name="Nomura Y."/>
            <person name="Togiya S."/>
            <person name="Komai F."/>
            <person name="Hara R."/>
            <person name="Takeuchi K."/>
            <person name="Arita M."/>
            <person name="Imose N."/>
            <person name="Musashino K."/>
            <person name="Yuuki H."/>
            <person name="Oshima A."/>
            <person name="Sasaki N."/>
            <person name="Aotsuka S."/>
            <person name="Yoshikawa Y."/>
            <person name="Matsunawa H."/>
            <person name="Ichihara T."/>
            <person name="Shiohata N."/>
            <person name="Sano S."/>
            <person name="Moriya S."/>
            <person name="Momiyama H."/>
            <person name="Satoh N."/>
            <person name="Takami S."/>
            <person name="Terashima Y."/>
            <person name="Suzuki O."/>
            <person name="Nakagawa S."/>
            <person name="Senoh A."/>
            <person name="Mizoguchi H."/>
            <person name="Goto Y."/>
            <person name="Shimizu F."/>
            <person name="Wakebe H."/>
            <person name="Hishigaki H."/>
            <person name="Watanabe T."/>
            <person name="Sugiyama A."/>
            <person name="Takemoto M."/>
            <person name="Kawakami B."/>
            <person name="Yamazaki M."/>
            <person name="Watanabe K."/>
            <person name="Kumagai A."/>
            <person name="Itakura S."/>
            <person name="Fukuzumi Y."/>
            <person name="Fujimori Y."/>
            <person name="Komiyama M."/>
            <person name="Tashiro H."/>
            <person name="Tanigami A."/>
            <person name="Fujiwara T."/>
            <person name="Ono T."/>
            <person name="Yamada K."/>
            <person name="Fujii Y."/>
            <person name="Ozaki K."/>
            <person name="Hirao M."/>
            <person name="Ohmori Y."/>
            <person name="Kawabata A."/>
            <person name="Hikiji T."/>
            <person name="Kobatake N."/>
            <person name="Inagaki H."/>
            <person name="Ikema Y."/>
            <person name="Okamoto S."/>
            <person name="Okitani R."/>
            <person name="Kawakami T."/>
            <person name="Noguchi S."/>
            <person name="Itoh T."/>
            <person name="Shigeta K."/>
            <person name="Senba T."/>
            <person name="Matsumura K."/>
            <person name="Nakajima Y."/>
            <person name="Mizuno T."/>
            <person name="Morinaga M."/>
            <person name="Sasaki M."/>
            <person name="Togashi T."/>
            <person name="Oyama M."/>
            <person name="Hata H."/>
            <person name="Watanabe M."/>
            <person name="Komatsu T."/>
            <person name="Mizushima-Sugano J."/>
            <person name="Satoh T."/>
            <person name="Shirai Y."/>
            <person name="Takahashi Y."/>
            <person name="Nakagawa K."/>
            <person name="Okumura K."/>
            <person name="Nagase T."/>
            <person name="Nomura N."/>
            <person name="Kikuchi H."/>
            <person name="Masuho Y."/>
            <person name="Yamashita R."/>
            <person name="Nakai K."/>
            <person name="Yada T."/>
            <person name="Nakamura Y."/>
            <person name="Ohara O."/>
            <person name="Isogai T."/>
            <person name="Sugano S."/>
        </authorList>
    </citation>
    <scope>NUCLEOTIDE SEQUENCE [LARGE SCALE MRNA] (ISOFORM 2)</scope>
    <source>
        <tissue>Brain</tissue>
    </source>
</reference>
<reference key="2">
    <citation type="journal article" date="2006" name="Nature">
        <title>DNA sequence and analysis of human chromosome 8.</title>
        <authorList>
            <person name="Nusbaum C."/>
            <person name="Mikkelsen T.S."/>
            <person name="Zody M.C."/>
            <person name="Asakawa S."/>
            <person name="Taudien S."/>
            <person name="Garber M."/>
            <person name="Kodira C.D."/>
            <person name="Schueler M.G."/>
            <person name="Shimizu A."/>
            <person name="Whittaker C.A."/>
            <person name="Chang J.L."/>
            <person name="Cuomo C.A."/>
            <person name="Dewar K."/>
            <person name="FitzGerald M.G."/>
            <person name="Yang X."/>
            <person name="Allen N.R."/>
            <person name="Anderson S."/>
            <person name="Asakawa T."/>
            <person name="Blechschmidt K."/>
            <person name="Bloom T."/>
            <person name="Borowsky M.L."/>
            <person name="Butler J."/>
            <person name="Cook A."/>
            <person name="Corum B."/>
            <person name="DeArellano K."/>
            <person name="DeCaprio D."/>
            <person name="Dooley K.T."/>
            <person name="Dorris L. III"/>
            <person name="Engels R."/>
            <person name="Gloeckner G."/>
            <person name="Hafez N."/>
            <person name="Hagopian D.S."/>
            <person name="Hall J.L."/>
            <person name="Ishikawa S.K."/>
            <person name="Jaffe D.B."/>
            <person name="Kamat A."/>
            <person name="Kudoh J."/>
            <person name="Lehmann R."/>
            <person name="Lokitsang T."/>
            <person name="Macdonald P."/>
            <person name="Major J.E."/>
            <person name="Matthews C.D."/>
            <person name="Mauceli E."/>
            <person name="Menzel U."/>
            <person name="Mihalev A.H."/>
            <person name="Minoshima S."/>
            <person name="Murayama Y."/>
            <person name="Naylor J.W."/>
            <person name="Nicol R."/>
            <person name="Nguyen C."/>
            <person name="O'Leary S.B."/>
            <person name="O'Neill K."/>
            <person name="Parker S.C.J."/>
            <person name="Polley A."/>
            <person name="Raymond C.K."/>
            <person name="Reichwald K."/>
            <person name="Rodriguez J."/>
            <person name="Sasaki T."/>
            <person name="Schilhabel M."/>
            <person name="Siddiqui R."/>
            <person name="Smith C.L."/>
            <person name="Sneddon T.P."/>
            <person name="Talamas J.A."/>
            <person name="Tenzin P."/>
            <person name="Topham K."/>
            <person name="Venkataraman V."/>
            <person name="Wen G."/>
            <person name="Yamazaki S."/>
            <person name="Young S.K."/>
            <person name="Zeng Q."/>
            <person name="Zimmer A.R."/>
            <person name="Rosenthal A."/>
            <person name="Birren B.W."/>
            <person name="Platzer M."/>
            <person name="Shimizu N."/>
            <person name="Lander E.S."/>
        </authorList>
    </citation>
    <scope>NUCLEOTIDE SEQUENCE [LARGE SCALE GENOMIC DNA]</scope>
</reference>
<reference key="3">
    <citation type="submission" date="2005-09" db="EMBL/GenBank/DDBJ databases">
        <authorList>
            <person name="Mural R.J."/>
            <person name="Istrail S."/>
            <person name="Sutton G.G."/>
            <person name="Florea L."/>
            <person name="Halpern A.L."/>
            <person name="Mobarry C.M."/>
            <person name="Lippert R."/>
            <person name="Walenz B."/>
            <person name="Shatkay H."/>
            <person name="Dew I."/>
            <person name="Miller J.R."/>
            <person name="Flanigan M.J."/>
            <person name="Edwards N.J."/>
            <person name="Bolanos R."/>
            <person name="Fasulo D."/>
            <person name="Halldorsson B.V."/>
            <person name="Hannenhalli S."/>
            <person name="Turner R."/>
            <person name="Yooseph S."/>
            <person name="Lu F."/>
            <person name="Nusskern D.R."/>
            <person name="Shue B.C."/>
            <person name="Zheng X.H."/>
            <person name="Zhong F."/>
            <person name="Delcher A.L."/>
            <person name="Huson D.H."/>
            <person name="Kravitz S.A."/>
            <person name="Mouchard L."/>
            <person name="Reinert K."/>
            <person name="Remington K.A."/>
            <person name="Clark A.G."/>
            <person name="Waterman M.S."/>
            <person name="Eichler E.E."/>
            <person name="Adams M.D."/>
            <person name="Hunkapiller M.W."/>
            <person name="Myers E.W."/>
            <person name="Venter J.C."/>
        </authorList>
    </citation>
    <scope>NUCLEOTIDE SEQUENCE [LARGE SCALE GENOMIC DNA]</scope>
</reference>
<evidence type="ECO:0000250" key="1"/>
<evidence type="ECO:0000255" key="2">
    <source>
        <dbReference type="PROSITE-ProRule" id="PRU00108"/>
    </source>
</evidence>
<evidence type="ECO:0000256" key="3">
    <source>
        <dbReference type="SAM" id="MobiDB-lite"/>
    </source>
</evidence>
<evidence type="ECO:0000303" key="4">
    <source>
    </source>
</evidence>
<gene>
    <name type="primary">NKX6-3</name>
</gene>
<proteinExistence type="evidence at protein level"/>